<keyword id="KW-0052">Apoplast</keyword>
<keyword id="KW-0186">Copper</keyword>
<keyword id="KW-0325">Glycoprotein</keyword>
<keyword id="KW-0439">Lignin degradation</keyword>
<keyword id="KW-0479">Metal-binding</keyword>
<keyword id="KW-0560">Oxidoreductase</keyword>
<keyword id="KW-1185">Reference proteome</keyword>
<keyword id="KW-0677">Repeat</keyword>
<keyword id="KW-0964">Secreted</keyword>
<keyword id="KW-0732">Signal</keyword>
<accession>Q0IP28</accession>
<accession>Q2QUK8</accession>
<sequence length="577" mass="63680">MTLHWSLLLFIAIALVSSVAQAAVVEHTFNVGNFSISQLCQPPLIITAVNGQLPGPTIYAREGDTVVVHLVNTSPYSMTLHWHGVLQRGTPWADGPAMVTQCPVQPGGNYTYRFNVDGQEGTLWWHAHVSFHRATVYGALVIRPRGGAKAYPFPKPDKEHVVILGEWWNATVYDMERMAFLTGIPAPHADAYTINGKPGDFYNCSAPNQTAKFEVRQNGTYLLRIINAGMNTPLFFKVAKHRLTVVGADACYTKPYKTDVVVVSPGQTVDALMVASAAVGRYYMAASPYDSAIPQGPPFSDTTATAILQYAGARRKTVRWRPPVLPRRPPVNDTATAHRFFSGMTALLRHGKPSAVPLAVDTHMYVTVGLGVSLCQPEQLLCNRSAPPVFSSSMNNASFVVPKNTSLLEAHFRREPAGVYTRDFPDTPPVVFDYTGDESDNATMQFTTKSTKVKTLRYNETVEMVLQNTRLIAKESHPMHIHGFNFFILAQGFGNYDKRRAERRFNLVDPQERNTIAVPTGGWAVIRFVADNPGMWYMHCHFDAHISLGLAMVLEVLDGPTPETSVPPPPADLPRCS</sequence>
<reference key="1">
    <citation type="journal article" date="2005" name="BMC Biol.">
        <title>The sequence of rice chromosomes 11 and 12, rich in disease resistance genes and recent gene duplications.</title>
        <authorList>
            <consortium name="The rice chromosomes 11 and 12 sequencing consortia"/>
        </authorList>
    </citation>
    <scope>NUCLEOTIDE SEQUENCE [LARGE SCALE GENOMIC DNA]</scope>
    <source>
        <strain>cv. Nipponbare</strain>
    </source>
</reference>
<reference key="2">
    <citation type="journal article" date="2005" name="Nature">
        <title>The map-based sequence of the rice genome.</title>
        <authorList>
            <consortium name="International rice genome sequencing project (IRGSP)"/>
        </authorList>
    </citation>
    <scope>NUCLEOTIDE SEQUENCE [LARGE SCALE GENOMIC DNA]</scope>
    <source>
        <strain>cv. Nipponbare</strain>
    </source>
</reference>
<reference key="3">
    <citation type="journal article" date="2008" name="Nucleic Acids Res.">
        <title>The rice annotation project database (RAP-DB): 2008 update.</title>
        <authorList>
            <consortium name="The rice annotation project (RAP)"/>
        </authorList>
    </citation>
    <scope>GENOME REANNOTATION</scope>
    <source>
        <strain>cv. Nipponbare</strain>
    </source>
</reference>
<reference key="4">
    <citation type="journal article" date="2013" name="Rice">
        <title>Improvement of the Oryza sativa Nipponbare reference genome using next generation sequence and optical map data.</title>
        <authorList>
            <person name="Kawahara Y."/>
            <person name="de la Bastide M."/>
            <person name="Hamilton J.P."/>
            <person name="Kanamori H."/>
            <person name="McCombie W.R."/>
            <person name="Ouyang S."/>
            <person name="Schwartz D.C."/>
            <person name="Tanaka T."/>
            <person name="Wu J."/>
            <person name="Zhou S."/>
            <person name="Childs K.L."/>
            <person name="Davidson R.M."/>
            <person name="Lin H."/>
            <person name="Quesada-Ocampo L."/>
            <person name="Vaillancourt B."/>
            <person name="Sakai H."/>
            <person name="Lee S.S."/>
            <person name="Kim J."/>
            <person name="Numa H."/>
            <person name="Itoh T."/>
            <person name="Buell C.R."/>
            <person name="Matsumoto T."/>
        </authorList>
    </citation>
    <scope>GENOME REANNOTATION</scope>
    <source>
        <strain>cv. Nipponbare</strain>
    </source>
</reference>
<proteinExistence type="inferred from homology"/>
<feature type="signal peptide" evidence="2">
    <location>
        <begin position="1"/>
        <end position="22"/>
    </location>
</feature>
<feature type="chain" id="PRO_0000291912" description="Laccase-25">
    <location>
        <begin position="23"/>
        <end position="577"/>
    </location>
</feature>
<feature type="domain" description="Plastocyanin-like 1">
    <location>
        <begin position="30"/>
        <end position="147"/>
    </location>
</feature>
<feature type="domain" description="Plastocyanin-like 2">
    <location>
        <begin position="158"/>
        <end position="313"/>
    </location>
</feature>
<feature type="domain" description="Plastocyanin-like 3">
    <location>
        <begin position="423"/>
        <end position="560"/>
    </location>
</feature>
<feature type="binding site" evidence="1">
    <location>
        <position position="81"/>
    </location>
    <ligand>
        <name>Cu cation</name>
        <dbReference type="ChEBI" id="CHEBI:23378"/>
        <label>1</label>
    </ligand>
</feature>
<feature type="binding site" evidence="1">
    <location>
        <position position="83"/>
    </location>
    <ligand>
        <name>Cu cation</name>
        <dbReference type="ChEBI" id="CHEBI:23378"/>
        <label>2</label>
    </ligand>
</feature>
<feature type="binding site" evidence="1">
    <location>
        <position position="126"/>
    </location>
    <ligand>
        <name>Cu cation</name>
        <dbReference type="ChEBI" id="CHEBI:23378"/>
        <label>2</label>
    </ligand>
</feature>
<feature type="binding site" evidence="1">
    <location>
        <position position="128"/>
    </location>
    <ligand>
        <name>Cu cation</name>
        <dbReference type="ChEBI" id="CHEBI:23378"/>
        <label>3</label>
    </ligand>
</feature>
<feature type="binding site" evidence="1">
    <location>
        <position position="477"/>
    </location>
    <ligand>
        <name>Cu cation</name>
        <dbReference type="ChEBI" id="CHEBI:23378"/>
        <label>4</label>
    </ligand>
</feature>
<feature type="binding site" evidence="1">
    <location>
        <position position="480"/>
    </location>
    <ligand>
        <name>Cu cation</name>
        <dbReference type="ChEBI" id="CHEBI:23378"/>
        <label>1</label>
    </ligand>
</feature>
<feature type="binding site" evidence="1">
    <location>
        <position position="482"/>
    </location>
    <ligand>
        <name>Cu cation</name>
        <dbReference type="ChEBI" id="CHEBI:23378"/>
        <label>3</label>
    </ligand>
</feature>
<feature type="binding site" evidence="1">
    <location>
        <position position="539"/>
    </location>
    <ligand>
        <name>Cu cation</name>
        <dbReference type="ChEBI" id="CHEBI:23378"/>
        <label>3</label>
    </ligand>
</feature>
<feature type="binding site" evidence="1">
    <location>
        <position position="540"/>
    </location>
    <ligand>
        <name>Cu cation</name>
        <dbReference type="ChEBI" id="CHEBI:23378"/>
        <label>4</label>
    </ligand>
</feature>
<feature type="binding site" evidence="1">
    <location>
        <position position="541"/>
    </location>
    <ligand>
        <name>Cu cation</name>
        <dbReference type="ChEBI" id="CHEBI:23378"/>
        <label>2</label>
    </ligand>
</feature>
<feature type="binding site" evidence="1">
    <location>
        <position position="545"/>
    </location>
    <ligand>
        <name>Cu cation</name>
        <dbReference type="ChEBI" id="CHEBI:23378"/>
        <label>4</label>
    </ligand>
</feature>
<feature type="glycosylation site" description="N-linked (GlcNAc...) asparagine" evidence="2">
    <location>
        <position position="33"/>
    </location>
</feature>
<feature type="glycosylation site" description="N-linked (GlcNAc...) asparagine" evidence="2">
    <location>
        <position position="109"/>
    </location>
</feature>
<feature type="glycosylation site" description="N-linked (GlcNAc...) asparagine" evidence="2">
    <location>
        <position position="169"/>
    </location>
</feature>
<feature type="glycosylation site" description="N-linked (GlcNAc...) asparagine" evidence="2">
    <location>
        <position position="203"/>
    </location>
</feature>
<feature type="glycosylation site" description="N-linked (GlcNAc...) asparagine" evidence="2">
    <location>
        <position position="208"/>
    </location>
</feature>
<feature type="glycosylation site" description="N-linked (GlcNAc...) asparagine" evidence="2">
    <location>
        <position position="218"/>
    </location>
</feature>
<feature type="glycosylation site" description="N-linked (GlcNAc...) asparagine" evidence="2">
    <location>
        <position position="332"/>
    </location>
</feature>
<feature type="glycosylation site" description="N-linked (GlcNAc...) asparagine" evidence="2">
    <location>
        <position position="383"/>
    </location>
</feature>
<feature type="glycosylation site" description="N-linked (GlcNAc...) asparagine" evidence="2">
    <location>
        <position position="396"/>
    </location>
</feature>
<feature type="glycosylation site" description="N-linked (GlcNAc...) asparagine" evidence="2">
    <location>
        <position position="404"/>
    </location>
</feature>
<feature type="glycosylation site" description="N-linked (GlcNAc...) asparagine" evidence="2">
    <location>
        <position position="441"/>
    </location>
</feature>
<feature type="glycosylation site" description="N-linked (GlcNAc...) asparagine" evidence="2">
    <location>
        <position position="459"/>
    </location>
</feature>
<dbReference type="EC" id="1.10.3.2"/>
<dbReference type="EMBL" id="DP000011">
    <property type="protein sequence ID" value="ABA97328.1"/>
    <property type="status" value="ALT_SEQ"/>
    <property type="molecule type" value="Genomic_DNA"/>
</dbReference>
<dbReference type="EMBL" id="AP008218">
    <property type="protein sequence ID" value="BAF29537.1"/>
    <property type="molecule type" value="Genomic_DNA"/>
</dbReference>
<dbReference type="EMBL" id="AP014968">
    <property type="status" value="NOT_ANNOTATED_CDS"/>
    <property type="molecule type" value="Genomic_DNA"/>
</dbReference>
<dbReference type="SMR" id="Q0IP28"/>
<dbReference type="FunCoup" id="Q0IP28">
    <property type="interactions" value="22"/>
</dbReference>
<dbReference type="STRING" id="39947.Q0IP28"/>
<dbReference type="GlyCosmos" id="Q0IP28">
    <property type="glycosylation" value="12 sites, No reported glycans"/>
</dbReference>
<dbReference type="PaxDb" id="39947-Q0IP28"/>
<dbReference type="KEGG" id="dosa:Os12g0259800"/>
<dbReference type="eggNOG" id="KOG1263">
    <property type="taxonomic scope" value="Eukaryota"/>
</dbReference>
<dbReference type="HOGENOM" id="CLU_006504_6_3_1"/>
<dbReference type="InParanoid" id="Q0IP28"/>
<dbReference type="Proteomes" id="UP000000763">
    <property type="component" value="Chromosome 12"/>
</dbReference>
<dbReference type="Proteomes" id="UP000059680">
    <property type="component" value="Chromosome 12"/>
</dbReference>
<dbReference type="GO" id="GO:0048046">
    <property type="term" value="C:apoplast"/>
    <property type="evidence" value="ECO:0007669"/>
    <property type="project" value="UniProtKB-SubCell"/>
</dbReference>
<dbReference type="GO" id="GO:0005507">
    <property type="term" value="F:copper ion binding"/>
    <property type="evidence" value="ECO:0007669"/>
    <property type="project" value="InterPro"/>
</dbReference>
<dbReference type="GO" id="GO:0052716">
    <property type="term" value="F:hydroquinone:oxygen oxidoreductase activity"/>
    <property type="evidence" value="ECO:0007669"/>
    <property type="project" value="UniProtKB-EC"/>
</dbReference>
<dbReference type="GO" id="GO:0016491">
    <property type="term" value="F:oxidoreductase activity"/>
    <property type="evidence" value="ECO:0000318"/>
    <property type="project" value="GO_Central"/>
</dbReference>
<dbReference type="GO" id="GO:0046274">
    <property type="term" value="P:lignin catabolic process"/>
    <property type="evidence" value="ECO:0007669"/>
    <property type="project" value="UniProtKB-KW"/>
</dbReference>
<dbReference type="CDD" id="cd13849">
    <property type="entry name" value="CuRO_1_LCC_plant"/>
    <property type="match status" value="1"/>
</dbReference>
<dbReference type="CDD" id="cd13875">
    <property type="entry name" value="CuRO_2_LCC_plant"/>
    <property type="match status" value="1"/>
</dbReference>
<dbReference type="CDD" id="cd13897">
    <property type="entry name" value="CuRO_3_LCC_plant"/>
    <property type="match status" value="1"/>
</dbReference>
<dbReference type="Gene3D" id="2.60.40.420">
    <property type="entry name" value="Cupredoxins - blue copper proteins"/>
    <property type="match status" value="3"/>
</dbReference>
<dbReference type="InterPro" id="IPR011707">
    <property type="entry name" value="Cu-oxidase-like_N"/>
</dbReference>
<dbReference type="InterPro" id="IPR001117">
    <property type="entry name" value="Cu-oxidase_2nd"/>
</dbReference>
<dbReference type="InterPro" id="IPR011706">
    <property type="entry name" value="Cu-oxidase_C"/>
</dbReference>
<dbReference type="InterPro" id="IPR045087">
    <property type="entry name" value="Cu-oxidase_fam"/>
</dbReference>
<dbReference type="InterPro" id="IPR002355">
    <property type="entry name" value="Cu_oxidase_Cu_BS"/>
</dbReference>
<dbReference type="InterPro" id="IPR008972">
    <property type="entry name" value="Cupredoxin"/>
</dbReference>
<dbReference type="InterPro" id="IPR034288">
    <property type="entry name" value="CuRO_1_LCC"/>
</dbReference>
<dbReference type="InterPro" id="IPR034285">
    <property type="entry name" value="CuRO_2_LCC"/>
</dbReference>
<dbReference type="InterPro" id="IPR034289">
    <property type="entry name" value="CuRO_3_LCC"/>
</dbReference>
<dbReference type="InterPro" id="IPR017761">
    <property type="entry name" value="Laccase"/>
</dbReference>
<dbReference type="NCBIfam" id="TIGR03389">
    <property type="entry name" value="laccase"/>
    <property type="match status" value="1"/>
</dbReference>
<dbReference type="PANTHER" id="PTHR11709:SF439">
    <property type="entry name" value="LACCASE-24"/>
    <property type="match status" value="1"/>
</dbReference>
<dbReference type="PANTHER" id="PTHR11709">
    <property type="entry name" value="MULTI-COPPER OXIDASE"/>
    <property type="match status" value="1"/>
</dbReference>
<dbReference type="Pfam" id="PF00394">
    <property type="entry name" value="Cu-oxidase"/>
    <property type="match status" value="1"/>
</dbReference>
<dbReference type="Pfam" id="PF07731">
    <property type="entry name" value="Cu-oxidase_2"/>
    <property type="match status" value="1"/>
</dbReference>
<dbReference type="Pfam" id="PF07732">
    <property type="entry name" value="Cu-oxidase_3"/>
    <property type="match status" value="1"/>
</dbReference>
<dbReference type="SUPFAM" id="SSF49503">
    <property type="entry name" value="Cupredoxins"/>
    <property type="match status" value="3"/>
</dbReference>
<dbReference type="PROSITE" id="PS00080">
    <property type="entry name" value="MULTICOPPER_OXIDASE2"/>
    <property type="match status" value="1"/>
</dbReference>
<evidence type="ECO:0000250" key="1"/>
<evidence type="ECO:0000255" key="2"/>
<evidence type="ECO:0000305" key="3"/>
<comment type="function">
    <text evidence="1">Lignin degradation and detoxification of lignin-derived products.</text>
</comment>
<comment type="catalytic activity">
    <reaction>
        <text>4 hydroquinone + O2 = 4 benzosemiquinone + 2 H2O</text>
        <dbReference type="Rhea" id="RHEA:11276"/>
        <dbReference type="ChEBI" id="CHEBI:15377"/>
        <dbReference type="ChEBI" id="CHEBI:15379"/>
        <dbReference type="ChEBI" id="CHEBI:17594"/>
        <dbReference type="ChEBI" id="CHEBI:17977"/>
        <dbReference type="EC" id="1.10.3.2"/>
    </reaction>
</comment>
<comment type="cofactor">
    <cofactor evidence="1">
        <name>Cu cation</name>
        <dbReference type="ChEBI" id="CHEBI:23378"/>
    </cofactor>
    <text evidence="1">Binds 4 Cu cations per monomer.</text>
</comment>
<comment type="subcellular location">
    <subcellularLocation>
        <location evidence="3">Secreted</location>
        <location evidence="3">Extracellular space</location>
        <location evidence="3">Apoplast</location>
    </subcellularLocation>
</comment>
<comment type="similarity">
    <text evidence="3">Belongs to the multicopper oxidase family.</text>
</comment>
<comment type="sequence caution" evidence="3">
    <conflict type="erroneous gene model prediction">
        <sequence resource="EMBL-CDS" id="ABA97328"/>
    </conflict>
</comment>
<gene>
    <name type="primary">LAC25</name>
    <name type="ordered locus">Os12g0259800</name>
    <name type="ordered locus">LOC_Os12g15920</name>
</gene>
<organism>
    <name type="scientific">Oryza sativa subsp. japonica</name>
    <name type="common">Rice</name>
    <dbReference type="NCBI Taxonomy" id="39947"/>
    <lineage>
        <taxon>Eukaryota</taxon>
        <taxon>Viridiplantae</taxon>
        <taxon>Streptophyta</taxon>
        <taxon>Embryophyta</taxon>
        <taxon>Tracheophyta</taxon>
        <taxon>Spermatophyta</taxon>
        <taxon>Magnoliopsida</taxon>
        <taxon>Liliopsida</taxon>
        <taxon>Poales</taxon>
        <taxon>Poaceae</taxon>
        <taxon>BOP clade</taxon>
        <taxon>Oryzoideae</taxon>
        <taxon>Oryzeae</taxon>
        <taxon>Oryzinae</taxon>
        <taxon>Oryza</taxon>
        <taxon>Oryza sativa</taxon>
    </lineage>
</organism>
<name>LAC25_ORYSJ</name>
<protein>
    <recommendedName>
        <fullName>Laccase-25</fullName>
        <ecNumber>1.10.3.2</ecNumber>
    </recommendedName>
    <alternativeName>
        <fullName>Benzenediol:oxygen oxidoreductase 25</fullName>
    </alternativeName>
    <alternativeName>
        <fullName>Diphenol oxidase 25</fullName>
    </alternativeName>
    <alternativeName>
        <fullName>Urishiol oxidase 25</fullName>
    </alternativeName>
</protein>